<accession>B3A0G1</accession>
<comment type="function">
    <text evidence="1">FMRFamides and FMRFamide-like peptides are neuropeptides.</text>
</comment>
<comment type="subcellular location">
    <subcellularLocation>
        <location evidence="6">Secreted</location>
    </subcellularLocation>
</comment>
<comment type="similarity">
    <text evidence="2">Belongs to the FARP (FMRF amide related peptide) family.</text>
</comment>
<dbReference type="GO" id="GO:0005576">
    <property type="term" value="C:extracellular region"/>
    <property type="evidence" value="ECO:0007669"/>
    <property type="project" value="UniProtKB-SubCell"/>
</dbReference>
<dbReference type="GO" id="GO:0007218">
    <property type="term" value="P:neuropeptide signaling pathway"/>
    <property type="evidence" value="ECO:0007669"/>
    <property type="project" value="UniProtKB-KW"/>
</dbReference>
<protein>
    <recommendedName>
        <fullName evidence="4">Extended FMRFamide-4</fullName>
        <shortName evidence="4">FMRFa-4</shortName>
    </recommendedName>
</protein>
<name>FAR4_PRAMA</name>
<reference evidence="5" key="1">
    <citation type="journal article" date="2012" name="Syst. Biol.">
        <title>Peptidomics-based phylogeny and biogeography of Mantophasmatodea (Hexapoda).</title>
        <authorList>
            <person name="Predel R."/>
            <person name="Neupert S."/>
            <person name="Huetteroth W."/>
            <person name="Kahnt J."/>
            <person name="Waidelich D."/>
            <person name="Roth S."/>
        </authorList>
    </citation>
    <scope>PROTEIN SEQUENCE</scope>
    <scope>AMIDATION AT LEU-9</scope>
    <source>
        <tissue evidence="3">Thoracic perisympathetic organs</tissue>
    </source>
</reference>
<proteinExistence type="evidence at protein level"/>
<evidence type="ECO:0000250" key="1">
    <source>
        <dbReference type="UniProtKB" id="P34405"/>
    </source>
</evidence>
<evidence type="ECO:0000255" key="2"/>
<evidence type="ECO:0000269" key="3">
    <source>
    </source>
</evidence>
<evidence type="ECO:0000303" key="4">
    <source>
    </source>
</evidence>
<evidence type="ECO:0000305" key="5"/>
<evidence type="ECO:0000305" key="6">
    <source>
    </source>
</evidence>
<sequence>GVDSSFLRL</sequence>
<organism>
    <name type="scientific">Praedatophasma maraisi</name>
    <name type="common">Gladiator</name>
    <name type="synonym">Heel-walker</name>
    <dbReference type="NCBI Taxonomy" id="409170"/>
    <lineage>
        <taxon>Eukaryota</taxon>
        <taxon>Metazoa</taxon>
        <taxon>Ecdysozoa</taxon>
        <taxon>Arthropoda</taxon>
        <taxon>Hexapoda</taxon>
        <taxon>Insecta</taxon>
        <taxon>Pterygota</taxon>
        <taxon>Neoptera</taxon>
        <taxon>Polyneoptera</taxon>
        <taxon>Mantophasmatodea</taxon>
        <taxon>Mantophasmatidae</taxon>
        <taxon>Praedatophasma</taxon>
    </lineage>
</organism>
<feature type="peptide" id="PRO_0000421509" description="Extended FMRFamide-4" evidence="3">
    <location>
        <begin position="1"/>
        <end position="9"/>
    </location>
</feature>
<feature type="modified residue" description="Leucine amide" evidence="3">
    <location>
        <position position="9"/>
    </location>
</feature>
<feature type="unsure residue" description="L or I" evidence="3">
    <location>
        <position position="7"/>
    </location>
</feature>
<feature type="unsure residue" description="L or I" evidence="3">
    <location>
        <position position="9"/>
    </location>
</feature>
<keyword id="KW-0027">Amidation</keyword>
<keyword id="KW-0903">Direct protein sequencing</keyword>
<keyword id="KW-0527">Neuropeptide</keyword>
<keyword id="KW-0964">Secreted</keyword>